<comment type="catalytic activity">
    <reaction evidence="1">
        <text>L-histidine = trans-urocanate + NH4(+)</text>
        <dbReference type="Rhea" id="RHEA:21232"/>
        <dbReference type="ChEBI" id="CHEBI:17771"/>
        <dbReference type="ChEBI" id="CHEBI:28938"/>
        <dbReference type="ChEBI" id="CHEBI:57595"/>
        <dbReference type="EC" id="4.3.1.3"/>
    </reaction>
</comment>
<comment type="pathway">
    <text evidence="1">Amino-acid degradation; L-histidine degradation into L-glutamate; N-formimidoyl-L-glutamate from L-histidine: step 1/3.</text>
</comment>
<comment type="subcellular location">
    <subcellularLocation>
        <location evidence="1">Cytoplasm</location>
    </subcellularLocation>
</comment>
<comment type="PTM">
    <text evidence="1">Contains an active site 4-methylidene-imidazol-5-one (MIO), which is formed autocatalytically by cyclization and dehydration of residues Ala-Ser-Gly.</text>
</comment>
<comment type="similarity">
    <text evidence="1">Belongs to the PAL/histidase family.</text>
</comment>
<evidence type="ECO:0000255" key="1">
    <source>
        <dbReference type="HAMAP-Rule" id="MF_00229"/>
    </source>
</evidence>
<organism>
    <name type="scientific">Paracidovorax citrulli (strain AAC00-1)</name>
    <name type="common">Acidovorax citrulli</name>
    <dbReference type="NCBI Taxonomy" id="397945"/>
    <lineage>
        <taxon>Bacteria</taxon>
        <taxon>Pseudomonadati</taxon>
        <taxon>Pseudomonadota</taxon>
        <taxon>Betaproteobacteria</taxon>
        <taxon>Burkholderiales</taxon>
        <taxon>Comamonadaceae</taxon>
        <taxon>Paracidovorax</taxon>
    </lineage>
</organism>
<protein>
    <recommendedName>
        <fullName evidence="1">Histidine ammonia-lyase</fullName>
        <shortName evidence="1">Histidase</shortName>
        <ecNumber evidence="1">4.3.1.3</ecNumber>
    </recommendedName>
</protein>
<keyword id="KW-0963">Cytoplasm</keyword>
<keyword id="KW-0369">Histidine metabolism</keyword>
<keyword id="KW-0456">Lyase</keyword>
<reference key="1">
    <citation type="submission" date="2006-12" db="EMBL/GenBank/DDBJ databases">
        <title>Complete sequence of Acidovorax avenae subsp. citrulli AAC00-1.</title>
        <authorList>
            <person name="Copeland A."/>
            <person name="Lucas S."/>
            <person name="Lapidus A."/>
            <person name="Barry K."/>
            <person name="Detter J.C."/>
            <person name="Glavina del Rio T."/>
            <person name="Dalin E."/>
            <person name="Tice H."/>
            <person name="Pitluck S."/>
            <person name="Kiss H."/>
            <person name="Brettin T."/>
            <person name="Bruce D."/>
            <person name="Han C."/>
            <person name="Tapia R."/>
            <person name="Gilna P."/>
            <person name="Schmutz J."/>
            <person name="Larimer F."/>
            <person name="Land M."/>
            <person name="Hauser L."/>
            <person name="Kyrpides N."/>
            <person name="Kim E."/>
            <person name="Stahl D."/>
            <person name="Richardson P."/>
        </authorList>
    </citation>
    <scope>NUCLEOTIDE SEQUENCE [LARGE SCALE GENOMIC DNA]</scope>
    <source>
        <strain>AAC00-1</strain>
    </source>
</reference>
<name>HUTH_PARC0</name>
<feature type="chain" id="PRO_1000021540" description="Histidine ammonia-lyase">
    <location>
        <begin position="1"/>
        <end position="512"/>
    </location>
</feature>
<feature type="modified residue" description="2,3-didehydroalanine (Ser)" evidence="1">
    <location>
        <position position="147"/>
    </location>
</feature>
<feature type="cross-link" description="5-imidazolinone (Ala-Gly)" evidence="1">
    <location>
        <begin position="146"/>
        <end position="148"/>
    </location>
</feature>
<gene>
    <name evidence="1" type="primary">hutH</name>
    <name type="ordered locus">Aave_2965</name>
</gene>
<dbReference type="EC" id="4.3.1.3" evidence="1"/>
<dbReference type="EMBL" id="CP000512">
    <property type="protein sequence ID" value="ABM33532.1"/>
    <property type="molecule type" value="Genomic_DNA"/>
</dbReference>
<dbReference type="RefSeq" id="WP_011796043.1">
    <property type="nucleotide sequence ID" value="NC_008752.1"/>
</dbReference>
<dbReference type="SMR" id="A1TRE4"/>
<dbReference type="STRING" id="397945.Aave_2965"/>
<dbReference type="KEGG" id="aav:Aave_2965"/>
<dbReference type="eggNOG" id="COG2986">
    <property type="taxonomic scope" value="Bacteria"/>
</dbReference>
<dbReference type="HOGENOM" id="CLU_014801_4_0_4"/>
<dbReference type="OrthoDB" id="9806955at2"/>
<dbReference type="UniPathway" id="UPA00379">
    <property type="reaction ID" value="UER00549"/>
</dbReference>
<dbReference type="Proteomes" id="UP000002596">
    <property type="component" value="Chromosome"/>
</dbReference>
<dbReference type="GO" id="GO:0005737">
    <property type="term" value="C:cytoplasm"/>
    <property type="evidence" value="ECO:0007669"/>
    <property type="project" value="UniProtKB-SubCell"/>
</dbReference>
<dbReference type="GO" id="GO:0004397">
    <property type="term" value="F:histidine ammonia-lyase activity"/>
    <property type="evidence" value="ECO:0007669"/>
    <property type="project" value="UniProtKB-UniRule"/>
</dbReference>
<dbReference type="GO" id="GO:0019556">
    <property type="term" value="P:L-histidine catabolic process to glutamate and formamide"/>
    <property type="evidence" value="ECO:0007669"/>
    <property type="project" value="UniProtKB-UniPathway"/>
</dbReference>
<dbReference type="GO" id="GO:0019557">
    <property type="term" value="P:L-histidine catabolic process to glutamate and formate"/>
    <property type="evidence" value="ECO:0007669"/>
    <property type="project" value="UniProtKB-UniPathway"/>
</dbReference>
<dbReference type="CDD" id="cd00332">
    <property type="entry name" value="PAL-HAL"/>
    <property type="match status" value="1"/>
</dbReference>
<dbReference type="FunFam" id="1.10.275.10:FF:000005">
    <property type="entry name" value="Histidine ammonia-lyase"/>
    <property type="match status" value="1"/>
</dbReference>
<dbReference type="FunFam" id="1.20.200.10:FF:000003">
    <property type="entry name" value="Histidine ammonia-lyase"/>
    <property type="match status" value="1"/>
</dbReference>
<dbReference type="Gene3D" id="1.20.200.10">
    <property type="entry name" value="Fumarase/aspartase (Central domain)"/>
    <property type="match status" value="1"/>
</dbReference>
<dbReference type="Gene3D" id="1.10.275.10">
    <property type="entry name" value="Fumarase/aspartase (N-terminal domain)"/>
    <property type="match status" value="1"/>
</dbReference>
<dbReference type="HAMAP" id="MF_00229">
    <property type="entry name" value="His_ammonia_lyase"/>
    <property type="match status" value="1"/>
</dbReference>
<dbReference type="InterPro" id="IPR001106">
    <property type="entry name" value="Aromatic_Lyase"/>
</dbReference>
<dbReference type="InterPro" id="IPR024083">
    <property type="entry name" value="Fumarase/histidase_N"/>
</dbReference>
<dbReference type="InterPro" id="IPR005921">
    <property type="entry name" value="HutH"/>
</dbReference>
<dbReference type="InterPro" id="IPR008948">
    <property type="entry name" value="L-Aspartase-like"/>
</dbReference>
<dbReference type="InterPro" id="IPR022313">
    <property type="entry name" value="Phe/His_NH3-lyase_AS"/>
</dbReference>
<dbReference type="NCBIfam" id="TIGR01225">
    <property type="entry name" value="hutH"/>
    <property type="match status" value="1"/>
</dbReference>
<dbReference type="NCBIfam" id="NF006871">
    <property type="entry name" value="PRK09367.1"/>
    <property type="match status" value="1"/>
</dbReference>
<dbReference type="PANTHER" id="PTHR10362">
    <property type="entry name" value="HISTIDINE AMMONIA-LYASE"/>
    <property type="match status" value="1"/>
</dbReference>
<dbReference type="Pfam" id="PF00221">
    <property type="entry name" value="Lyase_aromatic"/>
    <property type="match status" value="1"/>
</dbReference>
<dbReference type="SUPFAM" id="SSF48557">
    <property type="entry name" value="L-aspartase-like"/>
    <property type="match status" value="1"/>
</dbReference>
<dbReference type="PROSITE" id="PS00488">
    <property type="entry name" value="PAL_HISTIDASE"/>
    <property type="match status" value="1"/>
</dbReference>
<accession>A1TRE4</accession>
<sequence length="512" mass="52711">MSAMPTLVLHPGRVTLAELRAIAAGGQRLALDASALAGMRASQATVDRIALEEQVVYGINTGFGKLASTKIAHDRLAELQRNLVLSHSVGTGDPLPDGVVRMVLATKAVSLARGHSGVRPALVDALLALANADVLPVIPAKGSVGASGDLAPLAHLACVLIGEGAAQVGGRIVTGREAMAAVGLEPFVLGPKEGLALLNGTQVSTALALAGLFAAENVFAAGLVSGCLTLEAIKGSVKPFDARIHEARGQAGQIAVAAAVRALLEGSAIDPSHPDCGRVQDPYSIRCVPQVMGACLDNLSHAARVLQIEANAASDNPLVFTDTGEVISGGNFHAEPVAFAADIIALALSEIGAISERRLALLLDTGLSGLPAFLIRDSGVNSGFMIAQVTAAALAAENQCLAHPSSVTSLPTSANQEDHVSMATYAARRLLDMARNTAVIVGIEAMAAAQGMEFDRSLKSSPLIEAQFAAIRGRVAFLEQDRYLAPDIEAMRLWASTSAWPAPLAACLPSFQ</sequence>
<proteinExistence type="inferred from homology"/>